<protein>
    <recommendedName>
        <fullName evidence="3">2-(3-amino-3-carboxypropyl)histidine synthase subunit 1</fullName>
        <ecNumber evidence="2">2.5.1.108</ecNumber>
    </recommendedName>
    <alternativeName>
        <fullName>Diphthamide biosynthesis protein 1</fullName>
    </alternativeName>
    <alternativeName>
        <fullName evidence="3">Diphtheria toxin resistance protein 1</fullName>
    </alternativeName>
    <alternativeName>
        <fullName evidence="3">S-adenosyl-L-methionine:L-histidine 3-amino-3-carboxypropyltransferase 1</fullName>
    </alternativeName>
</protein>
<proteinExistence type="inferred from homology"/>
<dbReference type="EC" id="2.5.1.108" evidence="2"/>
<dbReference type="EMBL" id="AL590447">
    <property type="protein sequence ID" value="CAD25630.2"/>
    <property type="molecule type" value="Genomic_DNA"/>
</dbReference>
<dbReference type="RefSeq" id="NP_586026.1">
    <property type="nucleotide sequence ID" value="NM_001041648.1"/>
</dbReference>
<dbReference type="SMR" id="Q8SUZ5"/>
<dbReference type="FunCoup" id="Q8SUZ5">
    <property type="interactions" value="141"/>
</dbReference>
<dbReference type="STRING" id="284813.Q8SUZ5"/>
<dbReference type="GeneID" id="859456"/>
<dbReference type="KEGG" id="ecu:ECU07_0980"/>
<dbReference type="VEuPathDB" id="MicrosporidiaDB:ECU07_0980"/>
<dbReference type="HOGENOM" id="CLU_037146_1_1_1"/>
<dbReference type="InParanoid" id="Q8SUZ5"/>
<dbReference type="OrthoDB" id="1649088at2759"/>
<dbReference type="UniPathway" id="UPA00559"/>
<dbReference type="Proteomes" id="UP000000819">
    <property type="component" value="Chromosome VII"/>
</dbReference>
<dbReference type="GO" id="GO:0120513">
    <property type="term" value="C:2-(3-amino-3-carboxypropyl)histidine synthase complex"/>
    <property type="evidence" value="ECO:0000250"/>
    <property type="project" value="UniProtKB"/>
</dbReference>
<dbReference type="GO" id="GO:0005737">
    <property type="term" value="C:cytoplasm"/>
    <property type="evidence" value="ECO:0007669"/>
    <property type="project" value="UniProtKB-SubCell"/>
</dbReference>
<dbReference type="GO" id="GO:0090560">
    <property type="term" value="F:2-(3-amino-3-carboxypropyl)histidine synthase activity"/>
    <property type="evidence" value="ECO:0007669"/>
    <property type="project" value="UniProtKB-EC"/>
</dbReference>
<dbReference type="GO" id="GO:0051539">
    <property type="term" value="F:4 iron, 4 sulfur cluster binding"/>
    <property type="evidence" value="ECO:0000250"/>
    <property type="project" value="UniProtKB"/>
</dbReference>
<dbReference type="GO" id="GO:0046872">
    <property type="term" value="F:metal ion binding"/>
    <property type="evidence" value="ECO:0007669"/>
    <property type="project" value="UniProtKB-KW"/>
</dbReference>
<dbReference type="GO" id="GO:0017183">
    <property type="term" value="P:protein histidyl modification to diphthamide"/>
    <property type="evidence" value="ECO:0000250"/>
    <property type="project" value="UniProtKB"/>
</dbReference>
<dbReference type="Gene3D" id="3.40.50.11840">
    <property type="entry name" value="Diphthamide synthesis DPH1/DPH2 domain 1"/>
    <property type="match status" value="1"/>
</dbReference>
<dbReference type="Gene3D" id="3.40.50.11850">
    <property type="entry name" value="Diphthamide synthesis DPH1/DPH2 domain 2"/>
    <property type="match status" value="1"/>
</dbReference>
<dbReference type="Gene3D" id="3.40.50.11860">
    <property type="entry name" value="Diphthamide synthesis DPH1/DPH2 domain 3"/>
    <property type="match status" value="1"/>
</dbReference>
<dbReference type="InterPro" id="IPR016435">
    <property type="entry name" value="DPH1/DPH2"/>
</dbReference>
<dbReference type="InterPro" id="IPR042263">
    <property type="entry name" value="DPH1/DPH2_1"/>
</dbReference>
<dbReference type="InterPro" id="IPR042264">
    <property type="entry name" value="DPH1/DPH2_2"/>
</dbReference>
<dbReference type="InterPro" id="IPR042265">
    <property type="entry name" value="DPH1/DPH2_3"/>
</dbReference>
<dbReference type="InterPro" id="IPR035435">
    <property type="entry name" value="DPH1/DPH2_euk_archaea"/>
</dbReference>
<dbReference type="NCBIfam" id="TIGR00322">
    <property type="entry name" value="diphth2_R"/>
    <property type="match status" value="1"/>
</dbReference>
<dbReference type="PANTHER" id="PTHR10762:SF1">
    <property type="entry name" value="2-(3-AMINO-3-CARBOXYPROPYL)HISTIDINE SYNTHASE SUBUNIT 1"/>
    <property type="match status" value="1"/>
</dbReference>
<dbReference type="PANTHER" id="PTHR10762">
    <property type="entry name" value="DIPHTHAMIDE BIOSYNTHESIS PROTEIN"/>
    <property type="match status" value="1"/>
</dbReference>
<dbReference type="Pfam" id="PF01866">
    <property type="entry name" value="Diphthamide_syn"/>
    <property type="match status" value="1"/>
</dbReference>
<dbReference type="PIRSF" id="PIRSF004967">
    <property type="entry name" value="DPH1"/>
    <property type="match status" value="1"/>
</dbReference>
<dbReference type="SFLD" id="SFLDS00032">
    <property type="entry name" value="Radical_SAM_3-amino-3-carboxyp"/>
    <property type="match status" value="1"/>
</dbReference>
<sequence length="347" mass="39759">MVVLKQEEVPECLRYLPRNYNFETGKVLRTIRRLGAKRVTLQFPDGLLRYSFVIMDVIEKYTGAECILLNDVVYGGCCIDDESIASDLLVHYGHSCLVPVGEMSTKVLYIFVDIRIDIDHAAEMIRRNFQGKIGVIGTIQFNSSINRLKRVLDEERGGVECTLPQIRPLSSGEVLGCTAPKIEGVSAVISIGDGRFHLEGAMIRNPHLRFYKYCPFSRRMTQESYDHSTMLSDRKSEIRKAFSGRSFGVILGSLGRQGNRSILRSVVDRLKEYDVYLIMLDEISPKKLERYNFIDSFVQISCPRLSIDWGKLFKKPLLTPFEVFYSGGEYLMDYYSREGSGEWKNYR</sequence>
<accession>Q8SUZ5</accession>
<reference key="1">
    <citation type="journal article" date="2001" name="Nature">
        <title>Genome sequence and gene compaction of the eukaryote parasite Encephalitozoon cuniculi.</title>
        <authorList>
            <person name="Katinka M.D."/>
            <person name="Duprat S."/>
            <person name="Cornillot E."/>
            <person name="Metenier G."/>
            <person name="Thomarat F."/>
            <person name="Prensier G."/>
            <person name="Barbe V."/>
            <person name="Peyretaillade E."/>
            <person name="Brottier P."/>
            <person name="Wincker P."/>
            <person name="Delbac F."/>
            <person name="El Alaoui H."/>
            <person name="Peyret P."/>
            <person name="Saurin W."/>
            <person name="Gouy M."/>
            <person name="Weissenbach J."/>
            <person name="Vivares C.P."/>
        </authorList>
    </citation>
    <scope>NUCLEOTIDE SEQUENCE [LARGE SCALE GENOMIC DNA]</scope>
    <source>
        <strain>GB-M1</strain>
    </source>
</reference>
<reference key="2">
    <citation type="journal article" date="2009" name="BMC Genomics">
        <title>Identification of transcriptional signals in Encephalitozoon cuniculi widespread among Microsporidia phylum: support for accurate structural genome annotation.</title>
        <authorList>
            <person name="Peyretaillade E."/>
            <person name="Goncalves O."/>
            <person name="Terrat S."/>
            <person name="Dugat-Bony E."/>
            <person name="Wincker P."/>
            <person name="Cornman R.S."/>
            <person name="Evans J.D."/>
            <person name="Delbac F."/>
            <person name="Peyret P."/>
        </authorList>
    </citation>
    <scope>GENOME REANNOTATION</scope>
    <source>
        <strain>GB-M1</strain>
    </source>
</reference>
<name>DPH1_ENCCU</name>
<gene>
    <name type="primary">DPH1</name>
    <name type="ordered locus">ECU07_0980</name>
</gene>
<comment type="function">
    <text evidence="2">Catalyzes the first step of diphthamide biosynthesis, a post-translational modification of histidine which occurs in elongation factor 2. DPH1 and DPH2 transfer a 3-amino-3-carboxypropyl (ACP) group from S-adenosyl-L-methionine (SAM) to a histidine residue, the reaction is assisted by a reduction system comprising DPH3 and a NADH-dependent reductase, predominantly CBR1.</text>
</comment>
<comment type="catalytic activity">
    <reaction evidence="2">
        <text>L-histidyl-[translation elongation factor 2] + S-adenosyl-L-methionine = 2-[(3S)-amino-3-carboxypropyl]-L-histidyl-[translation elongation factor 2] + S-methyl-5'-thioadenosine + H(+)</text>
        <dbReference type="Rhea" id="RHEA:36783"/>
        <dbReference type="Rhea" id="RHEA-COMP:9748"/>
        <dbReference type="Rhea" id="RHEA-COMP:9749"/>
        <dbReference type="ChEBI" id="CHEBI:15378"/>
        <dbReference type="ChEBI" id="CHEBI:17509"/>
        <dbReference type="ChEBI" id="CHEBI:29979"/>
        <dbReference type="ChEBI" id="CHEBI:59789"/>
        <dbReference type="ChEBI" id="CHEBI:73995"/>
        <dbReference type="EC" id="2.5.1.108"/>
    </reaction>
</comment>
<comment type="cofactor">
    <cofactor evidence="2">
        <name>[4Fe-4S] cluster</name>
        <dbReference type="ChEBI" id="CHEBI:49883"/>
    </cofactor>
    <text evidence="2">Binds 1 [4Fe-4S] cluster per subunit. The cluster is coordinated with 3 cysteines and an exchangeable S-adenosyl-L-methionine.</text>
</comment>
<comment type="pathway">
    <text>Protein modification; peptidyl-diphthamide biosynthesis.</text>
</comment>
<comment type="subunit">
    <text evidence="2">Component of the 2-(3-amino-3-carboxypropyl)histidine synthase complex composed of DPH1, DPH2, DPH3 and a NADH-dependent reductase, predominantly CBR1.</text>
</comment>
<comment type="subcellular location">
    <subcellularLocation>
        <location evidence="2">Cytoplasm</location>
    </subcellularLocation>
</comment>
<comment type="similarity">
    <text evidence="3">Belongs to the DPH1/DPH2 family. DPH1 subfamily.</text>
</comment>
<feature type="chain" id="PRO_0000083374" description="2-(3-amino-3-carboxypropyl)histidine synthase subunit 1">
    <location>
        <begin position="1"/>
        <end position="347"/>
    </location>
</feature>
<feature type="binding site" evidence="1">
    <location>
        <position position="77"/>
    </location>
    <ligand>
        <name>[4Fe-4S] cluster</name>
        <dbReference type="ChEBI" id="CHEBI:49883"/>
    </ligand>
</feature>
<feature type="binding site" evidence="1">
    <location>
        <position position="177"/>
    </location>
    <ligand>
        <name>[4Fe-4S] cluster</name>
        <dbReference type="ChEBI" id="CHEBI:49883"/>
    </ligand>
</feature>
<feature type="binding site" evidence="1">
    <location>
        <position position="302"/>
    </location>
    <ligand>
        <name>[4Fe-4S] cluster</name>
        <dbReference type="ChEBI" id="CHEBI:49883"/>
    </ligand>
</feature>
<organism>
    <name type="scientific">Encephalitozoon cuniculi (strain GB-M1)</name>
    <name type="common">Microsporidian parasite</name>
    <dbReference type="NCBI Taxonomy" id="284813"/>
    <lineage>
        <taxon>Eukaryota</taxon>
        <taxon>Fungi</taxon>
        <taxon>Fungi incertae sedis</taxon>
        <taxon>Microsporidia</taxon>
        <taxon>Unikaryonidae</taxon>
        <taxon>Encephalitozoon</taxon>
    </lineage>
</organism>
<evidence type="ECO:0000250" key="1">
    <source>
        <dbReference type="UniProtKB" id="O58832"/>
    </source>
</evidence>
<evidence type="ECO:0000250" key="2">
    <source>
        <dbReference type="UniProtKB" id="P40487"/>
    </source>
</evidence>
<evidence type="ECO:0000305" key="3"/>
<keyword id="KW-0963">Cytoplasm</keyword>
<keyword id="KW-0408">Iron</keyword>
<keyword id="KW-0411">Iron-sulfur</keyword>
<keyword id="KW-0479">Metal-binding</keyword>
<keyword id="KW-1185">Reference proteome</keyword>
<keyword id="KW-0949">S-adenosyl-L-methionine</keyword>
<keyword id="KW-0808">Transferase</keyword>